<comment type="function">
    <text evidence="1 6">Acts as a regulator of endocytic traffic by participating in membrane delivery. Required for the abscission step in cytokinesis, possibly by acting as an 'address tag' delivering recycling endosome membranes to the cleavage furrow during late cytokinesis (By similarity). May play a role in differentiation during retinal development.</text>
</comment>
<comment type="subunit">
    <text evidence="1">Homodimer. Forms a complex with Rab11 (rab11a or rab11b) and arf6 (By similarity).</text>
</comment>
<comment type="subcellular location">
    <subcellularLocation>
        <location evidence="1">Recycling endosome membrane</location>
        <topology evidence="1">Peripheral membrane protein</topology>
    </subcellularLocation>
    <subcellularLocation>
        <location evidence="1">Cleavage furrow</location>
    </subcellularLocation>
    <subcellularLocation>
        <location evidence="1">Midbody</location>
    </subcellularLocation>
    <subcellularLocation>
        <location evidence="1">Cytoplasmic vesicle</location>
    </subcellularLocation>
    <text evidence="1">Recruited to the cleavage furrow and the midbody during cytokinesis.</text>
</comment>
<comment type="alternative products">
    <event type="alternative splicing"/>
    <isoform>
        <id>Q3LGD4-1</id>
        <name>1</name>
        <name>A</name>
        <sequence type="displayed"/>
    </isoform>
    <isoform>
        <id>Q3LGD4-2</id>
        <name>2</name>
        <name>B</name>
        <sequence type="described" ref="VSP_038669"/>
    </isoform>
</comment>
<comment type="tissue specificity">
    <text evidence="6">Isoform 1 is predominantly expressed in neural tissues. Isoform B is expressed ubiquitously. In the developing retina, it is expressed in progenitors throughout the retina at early stages and becomes restricted to the ganglion cell layer and ciliary marginal zone as differentiation proceeds.</text>
</comment>
<comment type="domain">
    <text evidence="1">The RBD-FIP domain mediates the interaction with Rab11 (rab11a or rab11b).</text>
</comment>
<comment type="miscellaneous">
    <molecule>Isoform 1</molecule>
    <text>Major form.</text>
</comment>
<keyword id="KW-0025">Alternative splicing</keyword>
<keyword id="KW-0106">Calcium</keyword>
<keyword id="KW-0131">Cell cycle</keyword>
<keyword id="KW-0132">Cell division</keyword>
<keyword id="KW-0175">Coiled coil</keyword>
<keyword id="KW-0968">Cytoplasmic vesicle</keyword>
<keyword id="KW-0967">Endosome</keyword>
<keyword id="KW-0472">Membrane</keyword>
<keyword id="KW-0479">Metal-binding</keyword>
<keyword id="KW-1185">Reference proteome</keyword>
<keyword id="KW-0677">Repeat</keyword>
<keyword id="KW-0813">Transport</keyword>
<accession>Q3LGD4</accession>
<accession>Q3LGD3</accession>
<dbReference type="EMBL" id="AB208638">
    <property type="protein sequence ID" value="BAE45289.1"/>
    <property type="molecule type" value="mRNA"/>
</dbReference>
<dbReference type="EMBL" id="AB208639">
    <property type="protein sequence ID" value="BAE45290.1"/>
    <property type="molecule type" value="mRNA"/>
</dbReference>
<dbReference type="RefSeq" id="NP_001002533.2">
    <molecule id="Q3LGD4-1"/>
    <property type="nucleotide sequence ID" value="NM_001002533.2"/>
</dbReference>
<dbReference type="RefSeq" id="XP_009297806.1">
    <property type="nucleotide sequence ID" value="XM_009299531.2"/>
</dbReference>
<dbReference type="RefSeq" id="XP_009297807.1">
    <molecule id="Q3LGD4-2"/>
    <property type="nucleotide sequence ID" value="XM_009299532.4"/>
</dbReference>
<dbReference type="SMR" id="Q3LGD4"/>
<dbReference type="FunCoup" id="Q3LGD4">
    <property type="interactions" value="598"/>
</dbReference>
<dbReference type="STRING" id="7955.ENSDARP00000108296"/>
<dbReference type="PaxDb" id="7955-ENSDARP00000070439"/>
<dbReference type="Ensembl" id="ENSDART00000123505">
    <molecule id="Q3LGD4-1"/>
    <property type="protein sequence ID" value="ENSDARP00000108296"/>
    <property type="gene ID" value="ENSDARG00000090170"/>
</dbReference>
<dbReference type="GeneID" id="436806"/>
<dbReference type="KEGG" id="dre:436806"/>
<dbReference type="AGR" id="ZFIN:ZDB-GENE-040718-266"/>
<dbReference type="CTD" id="436806"/>
<dbReference type="ZFIN" id="ZDB-GENE-040718-266">
    <property type="gene designation" value="rab11fip4a"/>
</dbReference>
<dbReference type="eggNOG" id="KOG0982">
    <property type="taxonomic scope" value="Eukaryota"/>
</dbReference>
<dbReference type="HOGENOM" id="CLU_018925_2_0_1"/>
<dbReference type="InParanoid" id="Q3LGD4"/>
<dbReference type="OMA" id="RENYSKM"/>
<dbReference type="OrthoDB" id="418358at2759"/>
<dbReference type="PhylomeDB" id="Q3LGD4"/>
<dbReference type="PRO" id="PR:Q3LGD4"/>
<dbReference type="Proteomes" id="UP000000437">
    <property type="component" value="Chromosome 3"/>
</dbReference>
<dbReference type="Bgee" id="ENSDARG00000090170">
    <property type="expression patterns" value="Expressed in retina and 27 other cell types or tissues"/>
</dbReference>
<dbReference type="ExpressionAtlas" id="Q3LGD4">
    <property type="expression patterns" value="baseline"/>
</dbReference>
<dbReference type="GO" id="GO:0032154">
    <property type="term" value="C:cleavage furrow"/>
    <property type="evidence" value="ECO:0000250"/>
    <property type="project" value="UniProtKB"/>
</dbReference>
<dbReference type="GO" id="GO:0030139">
    <property type="term" value="C:endocytic vesicle"/>
    <property type="evidence" value="ECO:0000250"/>
    <property type="project" value="UniProtKB"/>
</dbReference>
<dbReference type="GO" id="GO:0005768">
    <property type="term" value="C:endosome"/>
    <property type="evidence" value="ECO:0000250"/>
    <property type="project" value="UniProtKB"/>
</dbReference>
<dbReference type="GO" id="GO:0030496">
    <property type="term" value="C:midbody"/>
    <property type="evidence" value="ECO:0000250"/>
    <property type="project" value="UniProtKB"/>
</dbReference>
<dbReference type="GO" id="GO:0055038">
    <property type="term" value="C:recycling endosome membrane"/>
    <property type="evidence" value="ECO:0000250"/>
    <property type="project" value="UniProtKB"/>
</dbReference>
<dbReference type="GO" id="GO:0005509">
    <property type="term" value="F:calcium ion binding"/>
    <property type="evidence" value="ECO:0007669"/>
    <property type="project" value="InterPro"/>
</dbReference>
<dbReference type="GO" id="GO:0042803">
    <property type="term" value="F:protein homodimerization activity"/>
    <property type="evidence" value="ECO:0000250"/>
    <property type="project" value="UniProtKB"/>
</dbReference>
<dbReference type="GO" id="GO:0031267">
    <property type="term" value="F:small GTPase binding"/>
    <property type="evidence" value="ECO:0000250"/>
    <property type="project" value="UniProtKB"/>
</dbReference>
<dbReference type="GO" id="GO:0051301">
    <property type="term" value="P:cell division"/>
    <property type="evidence" value="ECO:0007669"/>
    <property type="project" value="UniProtKB-KW"/>
</dbReference>
<dbReference type="GO" id="GO:0032456">
    <property type="term" value="P:endocytic recycling"/>
    <property type="evidence" value="ECO:0000318"/>
    <property type="project" value="GO_Central"/>
</dbReference>
<dbReference type="GO" id="GO:0048592">
    <property type="term" value="P:eye morphogenesis"/>
    <property type="evidence" value="ECO:0000315"/>
    <property type="project" value="ZFIN"/>
</dbReference>
<dbReference type="GO" id="GO:0051726">
    <property type="term" value="P:regulation of cell cycle"/>
    <property type="evidence" value="ECO:0000315"/>
    <property type="project" value="ZFIN"/>
</dbReference>
<dbReference type="GO" id="GO:0032465">
    <property type="term" value="P:regulation of cytokinesis"/>
    <property type="evidence" value="ECO:0000250"/>
    <property type="project" value="UniProtKB"/>
</dbReference>
<dbReference type="FunFam" id="1.10.238.10:FF:000284">
    <property type="entry name" value="RAB11 family interacting protein 4"/>
    <property type="match status" value="1"/>
</dbReference>
<dbReference type="FunFam" id="1.20.5.2440:FF:000001">
    <property type="entry name" value="RAB11 family interacting protein 4"/>
    <property type="match status" value="1"/>
</dbReference>
<dbReference type="Gene3D" id="1.20.5.2440">
    <property type="match status" value="1"/>
</dbReference>
<dbReference type="Gene3D" id="1.10.238.10">
    <property type="entry name" value="EF-hand"/>
    <property type="match status" value="1"/>
</dbReference>
<dbReference type="InterPro" id="IPR011992">
    <property type="entry name" value="EF-hand-dom_pair"/>
</dbReference>
<dbReference type="InterPro" id="IPR002048">
    <property type="entry name" value="EF_hand_dom"/>
</dbReference>
<dbReference type="InterPro" id="IPR037245">
    <property type="entry name" value="FIP-RBD_C_sf"/>
</dbReference>
<dbReference type="InterPro" id="IPR019018">
    <property type="entry name" value="Rab-bd_FIP-RBD"/>
</dbReference>
<dbReference type="InterPro" id="IPR051977">
    <property type="entry name" value="Rab11-interacting_regulator"/>
</dbReference>
<dbReference type="PANTHER" id="PTHR15726:SF5">
    <property type="entry name" value="RAB11 FAMILY-INTERACTING PROTEIN 4"/>
    <property type="match status" value="1"/>
</dbReference>
<dbReference type="PANTHER" id="PTHR15726">
    <property type="entry name" value="RAB11-FAMILY INTERACTING PROTEIN"/>
    <property type="match status" value="1"/>
</dbReference>
<dbReference type="Pfam" id="PF13499">
    <property type="entry name" value="EF-hand_7"/>
    <property type="match status" value="1"/>
</dbReference>
<dbReference type="Pfam" id="PF25450">
    <property type="entry name" value="Rab11-FIP3"/>
    <property type="match status" value="1"/>
</dbReference>
<dbReference type="Pfam" id="PF09457">
    <property type="entry name" value="RBD-FIP"/>
    <property type="match status" value="1"/>
</dbReference>
<dbReference type="SMART" id="SM00054">
    <property type="entry name" value="EFh"/>
    <property type="match status" value="2"/>
</dbReference>
<dbReference type="SUPFAM" id="SSF47473">
    <property type="entry name" value="EF-hand"/>
    <property type="match status" value="1"/>
</dbReference>
<dbReference type="SUPFAM" id="SSF144270">
    <property type="entry name" value="Eferin C-derminal domain-like"/>
    <property type="match status" value="1"/>
</dbReference>
<dbReference type="PROSITE" id="PS50222">
    <property type="entry name" value="EF_HAND_2"/>
    <property type="match status" value="2"/>
</dbReference>
<dbReference type="PROSITE" id="PS51511">
    <property type="entry name" value="FIP_RBD"/>
    <property type="match status" value="1"/>
</dbReference>
<proteinExistence type="evidence at transcript level"/>
<evidence type="ECO:0000250" key="1"/>
<evidence type="ECO:0000255" key="2"/>
<evidence type="ECO:0000255" key="3">
    <source>
        <dbReference type="PROSITE-ProRule" id="PRU00448"/>
    </source>
</evidence>
<evidence type="ECO:0000255" key="4">
    <source>
        <dbReference type="PROSITE-ProRule" id="PRU00844"/>
    </source>
</evidence>
<evidence type="ECO:0000256" key="5">
    <source>
        <dbReference type="SAM" id="MobiDB-lite"/>
    </source>
</evidence>
<evidence type="ECO:0000269" key="6">
    <source>
    </source>
</evidence>
<evidence type="ECO:0000303" key="7">
    <source>
    </source>
</evidence>
<evidence type="ECO:0000305" key="8"/>
<gene>
    <name type="primary">rab11fip4a</name>
    <name type="synonym">rab11fip4</name>
</gene>
<protein>
    <recommendedName>
        <fullName>Rab11 family-interacting protein 4A</fullName>
        <shortName>FIP4-Rab11</shortName>
        <shortName>Rab11-FIP4-A</shortName>
        <shortName>zRab11-FIP4-A</shortName>
    </recommendedName>
</protein>
<feature type="chain" id="PRO_0000390972" description="Rab11 family-interacting protein 4A">
    <location>
        <begin position="1"/>
        <end position="621"/>
    </location>
</feature>
<feature type="domain" description="EF-hand 1" evidence="3">
    <location>
        <begin position="14"/>
        <end position="49"/>
    </location>
</feature>
<feature type="domain" description="EF-hand 2" evidence="3">
    <location>
        <begin position="47"/>
        <end position="82"/>
    </location>
</feature>
<feature type="domain" description="FIP-RBD" evidence="4">
    <location>
        <begin position="558"/>
        <end position="620"/>
    </location>
</feature>
<feature type="region of interest" description="Disordered" evidence="5">
    <location>
        <begin position="132"/>
        <end position="172"/>
    </location>
</feature>
<feature type="region of interest" description="Disordered" evidence="5">
    <location>
        <begin position="203"/>
        <end position="243"/>
    </location>
</feature>
<feature type="coiled-coil region" evidence="2">
    <location>
        <begin position="348"/>
        <end position="556"/>
    </location>
</feature>
<feature type="compositionally biased region" description="Low complexity" evidence="5">
    <location>
        <begin position="151"/>
        <end position="161"/>
    </location>
</feature>
<feature type="compositionally biased region" description="Basic and acidic residues" evidence="5">
    <location>
        <begin position="162"/>
        <end position="172"/>
    </location>
</feature>
<feature type="compositionally biased region" description="Polar residues" evidence="5">
    <location>
        <begin position="225"/>
        <end position="243"/>
    </location>
</feature>
<feature type="binding site" evidence="8">
    <location>
        <position position="27"/>
    </location>
    <ligand>
        <name>Ca(2+)</name>
        <dbReference type="ChEBI" id="CHEBI:29108"/>
        <label>1</label>
    </ligand>
</feature>
<feature type="binding site" evidence="8">
    <location>
        <position position="29"/>
    </location>
    <ligand>
        <name>Ca(2+)</name>
        <dbReference type="ChEBI" id="CHEBI:29108"/>
        <label>1</label>
    </ligand>
</feature>
<feature type="binding site" evidence="8">
    <location>
        <position position="31"/>
    </location>
    <ligand>
        <name>Ca(2+)</name>
        <dbReference type="ChEBI" id="CHEBI:29108"/>
        <label>1</label>
    </ligand>
</feature>
<feature type="binding site" evidence="8">
    <location>
        <position position="33"/>
    </location>
    <ligand>
        <name>Ca(2+)</name>
        <dbReference type="ChEBI" id="CHEBI:29108"/>
        <label>1</label>
    </ligand>
</feature>
<feature type="binding site" evidence="8">
    <location>
        <position position="38"/>
    </location>
    <ligand>
        <name>Ca(2+)</name>
        <dbReference type="ChEBI" id="CHEBI:29108"/>
        <label>1</label>
    </ligand>
</feature>
<feature type="binding site" evidence="8">
    <location>
        <position position="60"/>
    </location>
    <ligand>
        <name>Ca(2+)</name>
        <dbReference type="ChEBI" id="CHEBI:29108"/>
        <label>2</label>
    </ligand>
</feature>
<feature type="binding site" evidence="8">
    <location>
        <position position="62"/>
    </location>
    <ligand>
        <name>Ca(2+)</name>
        <dbReference type="ChEBI" id="CHEBI:29108"/>
        <label>2</label>
    </ligand>
</feature>
<feature type="binding site" evidence="8">
    <location>
        <position position="66"/>
    </location>
    <ligand>
        <name>Ca(2+)</name>
        <dbReference type="ChEBI" id="CHEBI:29108"/>
        <label>2</label>
    </ligand>
</feature>
<feature type="binding site" evidence="8">
    <location>
        <position position="71"/>
    </location>
    <ligand>
        <name>Ca(2+)</name>
        <dbReference type="ChEBI" id="CHEBI:29108"/>
        <label>2</label>
    </ligand>
</feature>
<feature type="splice variant" id="VSP_038669" description="In isoform 2." evidence="7">
    <location>
        <begin position="1"/>
        <end position="137"/>
    </location>
</feature>
<reference key="1">
    <citation type="journal article" date="2006" name="Dev. Biol.">
        <title>Rab11-FIP4 is predominantly expressed in neural tissues and involved in proliferation as well as in differentiation during zebrafish retinal development.</title>
        <authorList>
            <person name="Muto A."/>
            <person name="Arai K."/>
            <person name="Watanabe S."/>
        </authorList>
    </citation>
    <scope>NUCLEOTIDE SEQUENCE [MRNA] (ISOFORMS 1 AND 2)</scope>
    <scope>FUNCTION</scope>
    <scope>TISSUE SPECIFICITY</scope>
</reference>
<name>RFP4A_DANRE</name>
<sequence length="621" mass="70946">MDGNVFPDQEQLLAFLKKLKEVFDVCDEDADGYIRVEHFVDLGLQFGQGDEVKKFAKYLDPNAHGRINFKDFCHGVFAIKGCEEILKSALGTPTIAAQPYQTDNGYYYQHQEGSLGPPIIVCTRPYPECQLYSDEEGMGGRDMQESDMDSAADSGAGSESSEGGRQDDKEEGLGGFFLRGNNCGQMVSSAAASVISVEEQFEDYGEGEDVDFTPSSPIPDDDTRTNGFSDLGSSLPSSAGQTPQKIRHLYNSELLDVYCSQCCKKVNLLNDLEARLKNLKANSPNRKISSTAFGRQLFHHSNFSSSQGSTEDLFRDSIDSCDVDITEKVSYLEKKISELENDSLANGDLKSKLKQENTQLVHRVHELEEQIKDQETRAEQCLEEELKRHREAYSKMERDKSTEIELLSNRVQQLEEENAEMKVNVCRLKSQTEKLDQEKQRMTDKLEDTSLRLKDEMDLYRKMMDKLWQNRHEFQKEREAMQELIEDLRRELEHLQLFKLETEKPGRGRTAAGLSEYNAKTREIELEHEVKRLKQENHKLRDQNDDLNGQILSLSLYEAKNLFACHTKAQSLAAEIDNASRDELVDALKEQEEINFRLRQYMDKIILAILDHNPSILEIKH</sequence>
<organism>
    <name type="scientific">Danio rerio</name>
    <name type="common">Zebrafish</name>
    <name type="synonym">Brachydanio rerio</name>
    <dbReference type="NCBI Taxonomy" id="7955"/>
    <lineage>
        <taxon>Eukaryota</taxon>
        <taxon>Metazoa</taxon>
        <taxon>Chordata</taxon>
        <taxon>Craniata</taxon>
        <taxon>Vertebrata</taxon>
        <taxon>Euteleostomi</taxon>
        <taxon>Actinopterygii</taxon>
        <taxon>Neopterygii</taxon>
        <taxon>Teleostei</taxon>
        <taxon>Ostariophysi</taxon>
        <taxon>Cypriniformes</taxon>
        <taxon>Danionidae</taxon>
        <taxon>Danioninae</taxon>
        <taxon>Danio</taxon>
    </lineage>
</organism>